<name>GATC_CLOBL</name>
<accession>A7GIK3</accession>
<protein>
    <recommendedName>
        <fullName evidence="1">Aspartyl/glutamyl-tRNA(Asn/Gln) amidotransferase subunit C</fullName>
        <shortName evidence="1">Asp/Glu-ADT subunit C</shortName>
        <ecNumber evidence="1">6.3.5.-</ecNumber>
    </recommendedName>
</protein>
<dbReference type="EC" id="6.3.5.-" evidence="1"/>
<dbReference type="EMBL" id="CP000728">
    <property type="protein sequence ID" value="ABS40286.1"/>
    <property type="molecule type" value="Genomic_DNA"/>
</dbReference>
<dbReference type="RefSeq" id="WP_003357679.1">
    <property type="nucleotide sequence ID" value="NC_009699.1"/>
</dbReference>
<dbReference type="SMR" id="A7GIK3"/>
<dbReference type="GeneID" id="92940009"/>
<dbReference type="KEGG" id="cbf:CLI_3438"/>
<dbReference type="HOGENOM" id="CLU_105899_2_1_9"/>
<dbReference type="Proteomes" id="UP000002410">
    <property type="component" value="Chromosome"/>
</dbReference>
<dbReference type="GO" id="GO:0050566">
    <property type="term" value="F:asparaginyl-tRNA synthase (glutamine-hydrolyzing) activity"/>
    <property type="evidence" value="ECO:0007669"/>
    <property type="project" value="RHEA"/>
</dbReference>
<dbReference type="GO" id="GO:0005524">
    <property type="term" value="F:ATP binding"/>
    <property type="evidence" value="ECO:0007669"/>
    <property type="project" value="UniProtKB-KW"/>
</dbReference>
<dbReference type="GO" id="GO:0050567">
    <property type="term" value="F:glutaminyl-tRNA synthase (glutamine-hydrolyzing) activity"/>
    <property type="evidence" value="ECO:0007669"/>
    <property type="project" value="UniProtKB-UniRule"/>
</dbReference>
<dbReference type="GO" id="GO:0070681">
    <property type="term" value="P:glutaminyl-tRNAGln biosynthesis via transamidation"/>
    <property type="evidence" value="ECO:0007669"/>
    <property type="project" value="TreeGrafter"/>
</dbReference>
<dbReference type="GO" id="GO:0006450">
    <property type="term" value="P:regulation of translational fidelity"/>
    <property type="evidence" value="ECO:0007669"/>
    <property type="project" value="InterPro"/>
</dbReference>
<dbReference type="GO" id="GO:0006412">
    <property type="term" value="P:translation"/>
    <property type="evidence" value="ECO:0007669"/>
    <property type="project" value="UniProtKB-UniRule"/>
</dbReference>
<dbReference type="Gene3D" id="1.10.20.60">
    <property type="entry name" value="Glu-tRNAGln amidotransferase C subunit, N-terminal domain"/>
    <property type="match status" value="1"/>
</dbReference>
<dbReference type="HAMAP" id="MF_00122">
    <property type="entry name" value="GatC"/>
    <property type="match status" value="1"/>
</dbReference>
<dbReference type="InterPro" id="IPR036113">
    <property type="entry name" value="Asp/Glu-ADT_sf_sub_c"/>
</dbReference>
<dbReference type="InterPro" id="IPR003837">
    <property type="entry name" value="GatC"/>
</dbReference>
<dbReference type="NCBIfam" id="TIGR00135">
    <property type="entry name" value="gatC"/>
    <property type="match status" value="1"/>
</dbReference>
<dbReference type="PANTHER" id="PTHR15004">
    <property type="entry name" value="GLUTAMYL-TRNA(GLN) AMIDOTRANSFERASE SUBUNIT C, MITOCHONDRIAL"/>
    <property type="match status" value="1"/>
</dbReference>
<dbReference type="PANTHER" id="PTHR15004:SF0">
    <property type="entry name" value="GLUTAMYL-TRNA(GLN) AMIDOTRANSFERASE SUBUNIT C, MITOCHONDRIAL"/>
    <property type="match status" value="1"/>
</dbReference>
<dbReference type="Pfam" id="PF02686">
    <property type="entry name" value="GatC"/>
    <property type="match status" value="1"/>
</dbReference>
<dbReference type="SUPFAM" id="SSF141000">
    <property type="entry name" value="Glu-tRNAGln amidotransferase C subunit"/>
    <property type="match status" value="1"/>
</dbReference>
<comment type="function">
    <text evidence="1">Allows the formation of correctly charged Asn-tRNA(Asn) or Gln-tRNA(Gln) through the transamidation of misacylated Asp-tRNA(Asn) or Glu-tRNA(Gln) in organisms which lack either or both of asparaginyl-tRNA or glutaminyl-tRNA synthetases. The reaction takes place in the presence of glutamine and ATP through an activated phospho-Asp-tRNA(Asn) or phospho-Glu-tRNA(Gln).</text>
</comment>
<comment type="catalytic activity">
    <reaction evidence="1">
        <text>L-glutamyl-tRNA(Gln) + L-glutamine + ATP + H2O = L-glutaminyl-tRNA(Gln) + L-glutamate + ADP + phosphate + H(+)</text>
        <dbReference type="Rhea" id="RHEA:17521"/>
        <dbReference type="Rhea" id="RHEA-COMP:9681"/>
        <dbReference type="Rhea" id="RHEA-COMP:9684"/>
        <dbReference type="ChEBI" id="CHEBI:15377"/>
        <dbReference type="ChEBI" id="CHEBI:15378"/>
        <dbReference type="ChEBI" id="CHEBI:29985"/>
        <dbReference type="ChEBI" id="CHEBI:30616"/>
        <dbReference type="ChEBI" id="CHEBI:43474"/>
        <dbReference type="ChEBI" id="CHEBI:58359"/>
        <dbReference type="ChEBI" id="CHEBI:78520"/>
        <dbReference type="ChEBI" id="CHEBI:78521"/>
        <dbReference type="ChEBI" id="CHEBI:456216"/>
    </reaction>
</comment>
<comment type="catalytic activity">
    <reaction evidence="1">
        <text>L-aspartyl-tRNA(Asn) + L-glutamine + ATP + H2O = L-asparaginyl-tRNA(Asn) + L-glutamate + ADP + phosphate + 2 H(+)</text>
        <dbReference type="Rhea" id="RHEA:14513"/>
        <dbReference type="Rhea" id="RHEA-COMP:9674"/>
        <dbReference type="Rhea" id="RHEA-COMP:9677"/>
        <dbReference type="ChEBI" id="CHEBI:15377"/>
        <dbReference type="ChEBI" id="CHEBI:15378"/>
        <dbReference type="ChEBI" id="CHEBI:29985"/>
        <dbReference type="ChEBI" id="CHEBI:30616"/>
        <dbReference type="ChEBI" id="CHEBI:43474"/>
        <dbReference type="ChEBI" id="CHEBI:58359"/>
        <dbReference type="ChEBI" id="CHEBI:78515"/>
        <dbReference type="ChEBI" id="CHEBI:78516"/>
        <dbReference type="ChEBI" id="CHEBI:456216"/>
    </reaction>
</comment>
<comment type="subunit">
    <text evidence="1">Heterotrimer of A, B and C subunits.</text>
</comment>
<comment type="similarity">
    <text evidence="1">Belongs to the GatC family.</text>
</comment>
<reference key="1">
    <citation type="submission" date="2007-06" db="EMBL/GenBank/DDBJ databases">
        <authorList>
            <person name="Brinkac L.M."/>
            <person name="Daugherty S."/>
            <person name="Dodson R.J."/>
            <person name="Madupu R."/>
            <person name="Brown J.L."/>
            <person name="Bruce D."/>
            <person name="Detter C."/>
            <person name="Munk C."/>
            <person name="Smith L.A."/>
            <person name="Smith T.J."/>
            <person name="White O."/>
            <person name="Brettin T.S."/>
        </authorList>
    </citation>
    <scope>NUCLEOTIDE SEQUENCE [LARGE SCALE GENOMIC DNA]</scope>
    <source>
        <strain>Langeland / NCTC 10281 / Type F</strain>
    </source>
</reference>
<evidence type="ECO:0000255" key="1">
    <source>
        <dbReference type="HAMAP-Rule" id="MF_00122"/>
    </source>
</evidence>
<gene>
    <name evidence="1" type="primary">gatC</name>
    <name type="ordered locus">CLI_3438</name>
</gene>
<keyword id="KW-0067">ATP-binding</keyword>
<keyword id="KW-0436">Ligase</keyword>
<keyword id="KW-0547">Nucleotide-binding</keyword>
<keyword id="KW-0648">Protein biosynthesis</keyword>
<proteinExistence type="inferred from homology"/>
<feature type="chain" id="PRO_1000016109" description="Aspartyl/glutamyl-tRNA(Asn/Gln) amidotransferase subunit C">
    <location>
        <begin position="1"/>
        <end position="95"/>
    </location>
</feature>
<organism>
    <name type="scientific">Clostridium botulinum (strain Langeland / NCTC 10281 / Type F)</name>
    <dbReference type="NCBI Taxonomy" id="441772"/>
    <lineage>
        <taxon>Bacteria</taxon>
        <taxon>Bacillati</taxon>
        <taxon>Bacillota</taxon>
        <taxon>Clostridia</taxon>
        <taxon>Eubacteriales</taxon>
        <taxon>Clostridiaceae</taxon>
        <taxon>Clostridium</taxon>
    </lineage>
</organism>
<sequence length="95" mass="11251">MSVSKKDVEYVAELARLEFKEEEKDNFVNDLNKILNYMEKLDELNTDDVDIVVNPYYIENKYREDNVEKSMELKEVIDNAPESLEEYVIVPKVID</sequence>